<protein>
    <recommendedName>
        <fullName evidence="1">2-C-methyl-D-erythritol 4-phosphate cytidylyltransferase</fullName>
        <ecNumber evidence="1">2.7.7.60</ecNumber>
    </recommendedName>
    <alternativeName>
        <fullName evidence="1">4-diphosphocytidyl-2C-methyl-D-erythritol synthase</fullName>
    </alternativeName>
    <alternativeName>
        <fullName evidence="1">MEP cytidylyltransferase</fullName>
        <shortName evidence="1">MCT</shortName>
    </alternativeName>
</protein>
<evidence type="ECO:0000255" key="1">
    <source>
        <dbReference type="HAMAP-Rule" id="MF_00108"/>
    </source>
</evidence>
<comment type="function">
    <text evidence="1">Catalyzes the formation of 4-diphosphocytidyl-2-C-methyl-D-erythritol from CTP and 2-C-methyl-D-erythritol 4-phosphate (MEP).</text>
</comment>
<comment type="catalytic activity">
    <reaction evidence="1">
        <text>2-C-methyl-D-erythritol 4-phosphate + CTP + H(+) = 4-CDP-2-C-methyl-D-erythritol + diphosphate</text>
        <dbReference type="Rhea" id="RHEA:13429"/>
        <dbReference type="ChEBI" id="CHEBI:15378"/>
        <dbReference type="ChEBI" id="CHEBI:33019"/>
        <dbReference type="ChEBI" id="CHEBI:37563"/>
        <dbReference type="ChEBI" id="CHEBI:57823"/>
        <dbReference type="ChEBI" id="CHEBI:58262"/>
        <dbReference type="EC" id="2.7.7.60"/>
    </reaction>
</comment>
<comment type="pathway">
    <text evidence="1">Isoprenoid biosynthesis; isopentenyl diphosphate biosynthesis via DXP pathway; isopentenyl diphosphate from 1-deoxy-D-xylulose 5-phosphate: step 2/6.</text>
</comment>
<comment type="similarity">
    <text evidence="1">Belongs to the IspD/TarI cytidylyltransferase family. IspD subfamily.</text>
</comment>
<feature type="chain" id="PRO_0000075633" description="2-C-methyl-D-erythritol 4-phosphate cytidylyltransferase">
    <location>
        <begin position="1"/>
        <end position="236"/>
    </location>
</feature>
<feature type="site" description="Transition state stabilizer" evidence="1">
    <location>
        <position position="24"/>
    </location>
</feature>
<feature type="site" description="Transition state stabilizer" evidence="1">
    <location>
        <position position="31"/>
    </location>
</feature>
<feature type="site" description="Positions MEP for the nucleophilic attack" evidence="1">
    <location>
        <position position="159"/>
    </location>
</feature>
<feature type="site" description="Positions MEP for the nucleophilic attack" evidence="1">
    <location>
        <position position="215"/>
    </location>
</feature>
<reference key="1">
    <citation type="journal article" date="2004" name="Nucleic Acids Res.">
        <title>Genome sequence of Symbiobacterium thermophilum, an uncultivable bacterium that depends on microbial commensalism.</title>
        <authorList>
            <person name="Ueda K."/>
            <person name="Yamashita A."/>
            <person name="Ishikawa J."/>
            <person name="Shimada M."/>
            <person name="Watsuji T."/>
            <person name="Morimura K."/>
            <person name="Ikeda H."/>
            <person name="Hattori M."/>
            <person name="Beppu T."/>
        </authorList>
    </citation>
    <scope>NUCLEOTIDE SEQUENCE [LARGE SCALE GENOMIC DNA]</scope>
    <source>
        <strain>DSM 24528 / JCM 14929 / IAM 14863 / T</strain>
    </source>
</reference>
<organism>
    <name type="scientific">Symbiobacterium thermophilum (strain DSM 24528 / JCM 14929 / IAM 14863 / T)</name>
    <dbReference type="NCBI Taxonomy" id="292459"/>
    <lineage>
        <taxon>Bacteria</taxon>
        <taxon>Bacillati</taxon>
        <taxon>Bacillota</taxon>
        <taxon>Clostridia</taxon>
        <taxon>Eubacteriales</taxon>
        <taxon>Symbiobacteriaceae</taxon>
        <taxon>Symbiobacterium</taxon>
    </lineage>
</organism>
<proteinExistence type="inferred from homology"/>
<dbReference type="EC" id="2.7.7.60" evidence="1"/>
<dbReference type="EMBL" id="AP006840">
    <property type="protein sequence ID" value="BAD42105.1"/>
    <property type="molecule type" value="Genomic_DNA"/>
</dbReference>
<dbReference type="RefSeq" id="WP_011197236.1">
    <property type="nucleotide sequence ID" value="NC_006177.1"/>
</dbReference>
<dbReference type="SMR" id="Q67JP5"/>
<dbReference type="STRING" id="292459.STH3123"/>
<dbReference type="KEGG" id="sth:STH3123"/>
<dbReference type="eggNOG" id="COG1211">
    <property type="taxonomic scope" value="Bacteria"/>
</dbReference>
<dbReference type="HOGENOM" id="CLU_061281_2_2_9"/>
<dbReference type="UniPathway" id="UPA00056">
    <property type="reaction ID" value="UER00093"/>
</dbReference>
<dbReference type="Proteomes" id="UP000000417">
    <property type="component" value="Chromosome"/>
</dbReference>
<dbReference type="GO" id="GO:0050518">
    <property type="term" value="F:2-C-methyl-D-erythritol 4-phosphate cytidylyltransferase activity"/>
    <property type="evidence" value="ECO:0007669"/>
    <property type="project" value="UniProtKB-UniRule"/>
</dbReference>
<dbReference type="GO" id="GO:0019288">
    <property type="term" value="P:isopentenyl diphosphate biosynthetic process, methylerythritol 4-phosphate pathway"/>
    <property type="evidence" value="ECO:0007669"/>
    <property type="project" value="UniProtKB-UniRule"/>
</dbReference>
<dbReference type="CDD" id="cd02516">
    <property type="entry name" value="CDP-ME_synthetase"/>
    <property type="match status" value="1"/>
</dbReference>
<dbReference type="FunFam" id="3.90.550.10:FF:000003">
    <property type="entry name" value="2-C-methyl-D-erythritol 4-phosphate cytidylyltransferase"/>
    <property type="match status" value="1"/>
</dbReference>
<dbReference type="Gene3D" id="3.90.550.10">
    <property type="entry name" value="Spore Coat Polysaccharide Biosynthesis Protein SpsA, Chain A"/>
    <property type="match status" value="1"/>
</dbReference>
<dbReference type="HAMAP" id="MF_00108">
    <property type="entry name" value="IspD"/>
    <property type="match status" value="1"/>
</dbReference>
<dbReference type="InterPro" id="IPR001228">
    <property type="entry name" value="IspD"/>
</dbReference>
<dbReference type="InterPro" id="IPR034683">
    <property type="entry name" value="IspD/TarI"/>
</dbReference>
<dbReference type="InterPro" id="IPR050088">
    <property type="entry name" value="IspD/TarI_cytidylyltransf_bact"/>
</dbReference>
<dbReference type="InterPro" id="IPR029044">
    <property type="entry name" value="Nucleotide-diphossugar_trans"/>
</dbReference>
<dbReference type="NCBIfam" id="TIGR00453">
    <property type="entry name" value="ispD"/>
    <property type="match status" value="1"/>
</dbReference>
<dbReference type="PANTHER" id="PTHR32125">
    <property type="entry name" value="2-C-METHYL-D-ERYTHRITOL 4-PHOSPHATE CYTIDYLYLTRANSFERASE, CHLOROPLASTIC"/>
    <property type="match status" value="1"/>
</dbReference>
<dbReference type="PANTHER" id="PTHR32125:SF4">
    <property type="entry name" value="2-C-METHYL-D-ERYTHRITOL 4-PHOSPHATE CYTIDYLYLTRANSFERASE, CHLOROPLASTIC"/>
    <property type="match status" value="1"/>
</dbReference>
<dbReference type="Pfam" id="PF01128">
    <property type="entry name" value="IspD"/>
    <property type="match status" value="1"/>
</dbReference>
<dbReference type="SUPFAM" id="SSF53448">
    <property type="entry name" value="Nucleotide-diphospho-sugar transferases"/>
    <property type="match status" value="1"/>
</dbReference>
<sequence length="236" mass="25239">MSIHAGGLQVPVSVIIPAAGSGRRMGGGTAKQFLPLRGEPVLVRTVRRFSECPLVDEIVIAAGDVEATRALVGHMPKVTRIVQGGAERQDSVWAALQAVHSRPRIVAVHDAARPLLTADVLKGVLQAAADHPAQVVAVPVQDTIKQVGPDGVVVATPDRSMLWAVQTPQVFWADVLVRAFRQAIADGFLGTDDASLVERIGVPVRVYRGHPGNLKLTTPTDFRLAELLLEEEARQC</sequence>
<accession>Q67JP5</accession>
<keyword id="KW-0414">Isoprene biosynthesis</keyword>
<keyword id="KW-0548">Nucleotidyltransferase</keyword>
<keyword id="KW-1185">Reference proteome</keyword>
<keyword id="KW-0808">Transferase</keyword>
<gene>
    <name evidence="1" type="primary">ispD</name>
    <name type="ordered locus">STH3123</name>
</gene>
<name>ISPD_SYMTH</name>